<name>SYA_TROW8</name>
<feature type="chain" id="PRO_0000075238" description="Alanine--tRNA ligase">
    <location>
        <begin position="1"/>
        <end position="880"/>
    </location>
</feature>
<feature type="binding site" evidence="1">
    <location>
        <position position="548"/>
    </location>
    <ligand>
        <name>Zn(2+)</name>
        <dbReference type="ChEBI" id="CHEBI:29105"/>
    </ligand>
</feature>
<feature type="binding site" evidence="1">
    <location>
        <position position="552"/>
    </location>
    <ligand>
        <name>Zn(2+)</name>
        <dbReference type="ChEBI" id="CHEBI:29105"/>
    </ligand>
</feature>
<feature type="binding site" evidence="1">
    <location>
        <position position="651"/>
    </location>
    <ligand>
        <name>Zn(2+)</name>
        <dbReference type="ChEBI" id="CHEBI:29105"/>
    </ligand>
</feature>
<feature type="binding site" evidence="1">
    <location>
        <position position="655"/>
    </location>
    <ligand>
        <name>Zn(2+)</name>
        <dbReference type="ChEBI" id="CHEBI:29105"/>
    </ligand>
</feature>
<protein>
    <recommendedName>
        <fullName evidence="1">Alanine--tRNA ligase</fullName>
        <ecNumber evidence="1">6.1.1.7</ecNumber>
    </recommendedName>
    <alternativeName>
        <fullName evidence="1">Alanyl-tRNA synthetase</fullName>
        <shortName evidence="1">AlaRS</shortName>
    </alternativeName>
</protein>
<evidence type="ECO:0000255" key="1">
    <source>
        <dbReference type="HAMAP-Rule" id="MF_00036"/>
    </source>
</evidence>
<sequence>MLTSDLRLLFLDFFAKRGHKVSPSASLISNDPSVMFTIAGMLPFIQCFLALEPPPHPRVVSVQKCIRTSDIDEVGKTPRHGTFFQMMGNFSFGDYFKKEAIEYAWEFLLSELDLAPDRLWVTIHGDDKESEKFWLLCGVPQERVQSLDSNFWSTGKAGPAGPCSEVFYDLHGGPGPGPEGDPDRYLEVWNLVFMQNLRDNDGHIISSLPKKCVDTGMGLERIAMITQGVGTIYDTDELKPILDEAGYISGKRYGKDRRDDISLRVLADHIRSSLMLVADGLRPSNEGRGYILRRLLRRSVRAAKLLGIQENCFDQLFAKAAQVMKVGYPELEGKLAEIKQVACLEEQSFSRALNAGTQLLSRSMSSSKKRVSGDLAFRLHDTHGFPIDLITEIAKDSGLDVDMDGFFTLMKEQKDRSRAALSRSKPIVSDTTGYEGLRSNFLGYEMLQVDTKITALVKDGTILTSAKQGDCVDIALEQTPFYATAGGQEADRGFIESDNFSGKVVTVFSPLPGLTVHRCEIVSGLVVSGEVVRASVDSANRFAACQSHTATHVIHAVVREMFGSTSVQMGSYNRAGYLRFDFSCSYAPTDSQRIELEERANRAIQSCLEISSTYTTLEKAVASGAIALFGERYGDTVRMVEIGGPWSRELCAGTHLRNSSEIAVVSLVSETSVASGIRRVECLTGFDAFSHFAQERALVDTVMRTLGATRQEMEGAIDDLRENLKRSKHALQTAKDKFLSAFAPRLLQEFKSVSSVRILIADLSKFLSGPLFSPFEFTAEDIRAVTLRCKKLLEEPHVLLLAAVISGRVHAACSIDLSSVKLSCMDDLSANNLIKVFLKTLDGSGGGRADFAQGAGWNAKLLDSALDNLKACVIGKLSGV</sequence>
<reference key="1">
    <citation type="journal article" date="2003" name="Lancet">
        <title>Sequencing and analysis of the genome of the Whipple's disease bacterium Tropheryma whipplei.</title>
        <authorList>
            <person name="Bentley S.D."/>
            <person name="Maiwald M."/>
            <person name="Murphy L.D."/>
            <person name="Pallen M.J."/>
            <person name="Yeats C.A."/>
            <person name="Dover L.G."/>
            <person name="Norbertczak H.T."/>
            <person name="Besra G.S."/>
            <person name="Quail M.A."/>
            <person name="Harris D.E."/>
            <person name="von Herbay A."/>
            <person name="Goble A."/>
            <person name="Rutter S."/>
            <person name="Squares R."/>
            <person name="Squares S."/>
            <person name="Barrell B.G."/>
            <person name="Parkhill J."/>
            <person name="Relman D.A."/>
        </authorList>
    </citation>
    <scope>NUCLEOTIDE SEQUENCE [LARGE SCALE GENOMIC DNA]</scope>
    <source>
        <strain>TW08/27</strain>
    </source>
</reference>
<dbReference type="EC" id="6.1.1.7" evidence="1"/>
<dbReference type="EMBL" id="BX251411">
    <property type="protein sequence ID" value="CAD67064.1"/>
    <property type="molecule type" value="Genomic_DNA"/>
</dbReference>
<dbReference type="RefSeq" id="WP_011096344.1">
    <property type="nucleotide sequence ID" value="NC_004551.1"/>
</dbReference>
<dbReference type="SMR" id="Q83HV0"/>
<dbReference type="GeneID" id="67388172"/>
<dbReference type="KEGG" id="tws:TW393"/>
<dbReference type="HOGENOM" id="CLU_004485_1_1_11"/>
<dbReference type="GO" id="GO:0005829">
    <property type="term" value="C:cytosol"/>
    <property type="evidence" value="ECO:0007669"/>
    <property type="project" value="TreeGrafter"/>
</dbReference>
<dbReference type="GO" id="GO:0004813">
    <property type="term" value="F:alanine-tRNA ligase activity"/>
    <property type="evidence" value="ECO:0007669"/>
    <property type="project" value="UniProtKB-UniRule"/>
</dbReference>
<dbReference type="GO" id="GO:0002161">
    <property type="term" value="F:aminoacyl-tRNA deacylase activity"/>
    <property type="evidence" value="ECO:0007669"/>
    <property type="project" value="TreeGrafter"/>
</dbReference>
<dbReference type="GO" id="GO:0005524">
    <property type="term" value="F:ATP binding"/>
    <property type="evidence" value="ECO:0007669"/>
    <property type="project" value="UniProtKB-UniRule"/>
</dbReference>
<dbReference type="GO" id="GO:0000049">
    <property type="term" value="F:tRNA binding"/>
    <property type="evidence" value="ECO:0007669"/>
    <property type="project" value="UniProtKB-KW"/>
</dbReference>
<dbReference type="GO" id="GO:0008270">
    <property type="term" value="F:zinc ion binding"/>
    <property type="evidence" value="ECO:0007669"/>
    <property type="project" value="UniProtKB-UniRule"/>
</dbReference>
<dbReference type="GO" id="GO:0006419">
    <property type="term" value="P:alanyl-tRNA aminoacylation"/>
    <property type="evidence" value="ECO:0007669"/>
    <property type="project" value="UniProtKB-UniRule"/>
</dbReference>
<dbReference type="CDD" id="cd00673">
    <property type="entry name" value="AlaRS_core"/>
    <property type="match status" value="1"/>
</dbReference>
<dbReference type="FunFam" id="3.30.980.10:FF:000004">
    <property type="entry name" value="Alanine--tRNA ligase, cytoplasmic"/>
    <property type="match status" value="1"/>
</dbReference>
<dbReference type="Gene3D" id="2.40.30.130">
    <property type="match status" value="1"/>
</dbReference>
<dbReference type="Gene3D" id="3.10.310.40">
    <property type="match status" value="1"/>
</dbReference>
<dbReference type="Gene3D" id="3.30.54.20">
    <property type="match status" value="1"/>
</dbReference>
<dbReference type="Gene3D" id="3.30.930.10">
    <property type="entry name" value="Bira Bifunctional Protein, Domain 2"/>
    <property type="match status" value="1"/>
</dbReference>
<dbReference type="Gene3D" id="3.30.980.10">
    <property type="entry name" value="Threonyl-trna Synthetase, Chain A, domain 2"/>
    <property type="match status" value="1"/>
</dbReference>
<dbReference type="HAMAP" id="MF_00036_B">
    <property type="entry name" value="Ala_tRNA_synth_B"/>
    <property type="match status" value="1"/>
</dbReference>
<dbReference type="InterPro" id="IPR045864">
    <property type="entry name" value="aa-tRNA-synth_II/BPL/LPL"/>
</dbReference>
<dbReference type="InterPro" id="IPR002318">
    <property type="entry name" value="Ala-tRNA-lgiase_IIc"/>
</dbReference>
<dbReference type="InterPro" id="IPR018162">
    <property type="entry name" value="Ala-tRNA-ligase_IIc_anticod-bd"/>
</dbReference>
<dbReference type="InterPro" id="IPR018165">
    <property type="entry name" value="Ala-tRNA-synth_IIc_core"/>
</dbReference>
<dbReference type="InterPro" id="IPR018164">
    <property type="entry name" value="Ala-tRNA-synth_IIc_N"/>
</dbReference>
<dbReference type="InterPro" id="IPR050058">
    <property type="entry name" value="Ala-tRNA_ligase"/>
</dbReference>
<dbReference type="InterPro" id="IPR023033">
    <property type="entry name" value="Ala_tRNA_ligase_euk/bac"/>
</dbReference>
<dbReference type="InterPro" id="IPR003156">
    <property type="entry name" value="DHHA1_dom"/>
</dbReference>
<dbReference type="InterPro" id="IPR018163">
    <property type="entry name" value="Thr/Ala-tRNA-synth_IIc_edit"/>
</dbReference>
<dbReference type="InterPro" id="IPR009000">
    <property type="entry name" value="Transl_B-barrel_sf"/>
</dbReference>
<dbReference type="InterPro" id="IPR012947">
    <property type="entry name" value="tRNA_SAD"/>
</dbReference>
<dbReference type="NCBIfam" id="TIGR00344">
    <property type="entry name" value="alaS"/>
    <property type="match status" value="1"/>
</dbReference>
<dbReference type="PANTHER" id="PTHR11777:SF9">
    <property type="entry name" value="ALANINE--TRNA LIGASE, CYTOPLASMIC"/>
    <property type="match status" value="1"/>
</dbReference>
<dbReference type="PANTHER" id="PTHR11777">
    <property type="entry name" value="ALANYL-TRNA SYNTHETASE"/>
    <property type="match status" value="1"/>
</dbReference>
<dbReference type="Pfam" id="PF02272">
    <property type="entry name" value="DHHA1"/>
    <property type="match status" value="1"/>
</dbReference>
<dbReference type="Pfam" id="PF01411">
    <property type="entry name" value="tRNA-synt_2c"/>
    <property type="match status" value="1"/>
</dbReference>
<dbReference type="Pfam" id="PF07973">
    <property type="entry name" value="tRNA_SAD"/>
    <property type="match status" value="1"/>
</dbReference>
<dbReference type="PRINTS" id="PR00980">
    <property type="entry name" value="TRNASYNTHALA"/>
</dbReference>
<dbReference type="SMART" id="SM00863">
    <property type="entry name" value="tRNA_SAD"/>
    <property type="match status" value="1"/>
</dbReference>
<dbReference type="SUPFAM" id="SSF55681">
    <property type="entry name" value="Class II aaRS and biotin synthetases"/>
    <property type="match status" value="1"/>
</dbReference>
<dbReference type="SUPFAM" id="SSF101353">
    <property type="entry name" value="Putative anticodon-binding domain of alanyl-tRNA synthetase (AlaRS)"/>
    <property type="match status" value="1"/>
</dbReference>
<dbReference type="SUPFAM" id="SSF55186">
    <property type="entry name" value="ThrRS/AlaRS common domain"/>
    <property type="match status" value="1"/>
</dbReference>
<dbReference type="SUPFAM" id="SSF50447">
    <property type="entry name" value="Translation proteins"/>
    <property type="match status" value="1"/>
</dbReference>
<dbReference type="PROSITE" id="PS50860">
    <property type="entry name" value="AA_TRNA_LIGASE_II_ALA"/>
    <property type="match status" value="1"/>
</dbReference>
<comment type="function">
    <text evidence="1">Catalyzes the attachment of alanine to tRNA(Ala) in a two-step reaction: alanine is first activated by ATP to form Ala-AMP and then transferred to the acceptor end of tRNA(Ala). Also edits incorrectly charged Ser-tRNA(Ala) and Gly-tRNA(Ala) via its editing domain.</text>
</comment>
<comment type="catalytic activity">
    <reaction evidence="1">
        <text>tRNA(Ala) + L-alanine + ATP = L-alanyl-tRNA(Ala) + AMP + diphosphate</text>
        <dbReference type="Rhea" id="RHEA:12540"/>
        <dbReference type="Rhea" id="RHEA-COMP:9657"/>
        <dbReference type="Rhea" id="RHEA-COMP:9923"/>
        <dbReference type="ChEBI" id="CHEBI:30616"/>
        <dbReference type="ChEBI" id="CHEBI:33019"/>
        <dbReference type="ChEBI" id="CHEBI:57972"/>
        <dbReference type="ChEBI" id="CHEBI:78442"/>
        <dbReference type="ChEBI" id="CHEBI:78497"/>
        <dbReference type="ChEBI" id="CHEBI:456215"/>
        <dbReference type="EC" id="6.1.1.7"/>
    </reaction>
</comment>
<comment type="cofactor">
    <cofactor evidence="1">
        <name>Zn(2+)</name>
        <dbReference type="ChEBI" id="CHEBI:29105"/>
    </cofactor>
    <text evidence="1">Binds 1 zinc ion per subunit.</text>
</comment>
<comment type="subcellular location">
    <subcellularLocation>
        <location evidence="1">Cytoplasm</location>
    </subcellularLocation>
</comment>
<comment type="domain">
    <text evidence="1">Consists of three domains; the N-terminal catalytic domain, the editing domain and the C-terminal C-Ala domain. The editing domain removes incorrectly charged amino acids, while the C-Ala domain, along with tRNA(Ala), serves as a bridge to cooperatively bring together the editing and aminoacylation centers thus stimulating deacylation of misacylated tRNAs.</text>
</comment>
<comment type="similarity">
    <text evidence="1">Belongs to the class-II aminoacyl-tRNA synthetase family.</text>
</comment>
<organism>
    <name type="scientific">Tropheryma whipplei (strain TW08/27)</name>
    <name type="common">Whipple's bacillus</name>
    <dbReference type="NCBI Taxonomy" id="218496"/>
    <lineage>
        <taxon>Bacteria</taxon>
        <taxon>Bacillati</taxon>
        <taxon>Actinomycetota</taxon>
        <taxon>Actinomycetes</taxon>
        <taxon>Micrococcales</taxon>
        <taxon>Tropherymataceae</taxon>
        <taxon>Tropheryma</taxon>
    </lineage>
</organism>
<proteinExistence type="inferred from homology"/>
<gene>
    <name evidence="1" type="primary">alaS</name>
    <name type="ordered locus">TW393</name>
</gene>
<keyword id="KW-0030">Aminoacyl-tRNA synthetase</keyword>
<keyword id="KW-0067">ATP-binding</keyword>
<keyword id="KW-0963">Cytoplasm</keyword>
<keyword id="KW-0436">Ligase</keyword>
<keyword id="KW-0479">Metal-binding</keyword>
<keyword id="KW-0547">Nucleotide-binding</keyword>
<keyword id="KW-0648">Protein biosynthesis</keyword>
<keyword id="KW-0694">RNA-binding</keyword>
<keyword id="KW-0820">tRNA-binding</keyword>
<keyword id="KW-0862">Zinc</keyword>
<accession>Q83HV0</accession>